<protein>
    <recommendedName>
        <fullName evidence="2">Molybdopterin synthase sulfur carrier subunit</fullName>
    </recommendedName>
    <alternativeName>
        <fullName evidence="2">Molybdenum cofactor synthesis protein 2 small subunit</fullName>
    </alternativeName>
    <alternativeName>
        <fullName evidence="2">Molybdenum cofactor synthesis protein 2A</fullName>
        <shortName evidence="2">MOCS2A</shortName>
    </alternativeName>
    <alternativeName>
        <fullName evidence="2">Sulfur carrier protein MOCS2A</fullName>
    </alternativeName>
</protein>
<gene>
    <name type="primary">mocs2s</name>
    <name type="synonym">moco1s</name>
    <name type="ORF">DDB_G0285133</name>
</gene>
<comment type="function">
    <text evidence="1">Acts as a sulfur carrier required for molybdopterin biosynthesis. Component of the molybdopterin synthase complex that catalyzes the conversion of precursor Z into molybdopterin by mediating the incorporation of 2 sulfur atoms into precursor Z to generate a dithiolene group. In the complex, serves as sulfur donor by being thiocarboxylated (-COSH) at its C-terminus by mocs3. After interaction with mocs2l, the sulfur is then transferred to precursor Z to form molybdopterin (By similarity).</text>
</comment>
<comment type="pathway">
    <text evidence="2">Cofactor biosynthesis; molybdopterin biosynthesis.</text>
</comment>
<comment type="subunit">
    <text evidence="1">Heterotetramer; composed of 2 small (mocs2s) and 2 large (mocs2l) subunits.</text>
</comment>
<comment type="subcellular location">
    <subcellularLocation>
        <location evidence="2">Cytoplasm</location>
    </subcellularLocation>
</comment>
<comment type="PTM">
    <text evidence="2">C-terminal thiocarboxylation occurs in 2 steps, it is first acyl-adenylated (-COAMP) via the hesA/moeB/thiF part of mocs3, then thiocarboxylated (-COSH) via the rhodanese domain of mocs3.</text>
</comment>
<comment type="similarity">
    <text evidence="2">Belongs to the MoaD family. MOCS2A subfamily.</text>
</comment>
<proteinExistence type="inferred from homology"/>
<accession>Q54NM8</accession>
<sequence>MSNQFKILLFAKVKEVIGKDSIFIDLPLDESTSFNLIRKLKHIYPQISSTLEVSLLAVNQEYISRDQDIKINSNDEIAIIPPVSGG</sequence>
<name>MOC2A_DICDI</name>
<keyword id="KW-0963">Cytoplasm</keyword>
<keyword id="KW-0501">Molybdenum cofactor biosynthesis</keyword>
<keyword id="KW-0547">Nucleotide-binding</keyword>
<keyword id="KW-0597">Phosphoprotein</keyword>
<keyword id="KW-1185">Reference proteome</keyword>
<reference key="1">
    <citation type="journal article" date="2005" name="Nature">
        <title>The genome of the social amoeba Dictyostelium discoideum.</title>
        <authorList>
            <person name="Eichinger L."/>
            <person name="Pachebat J.A."/>
            <person name="Gloeckner G."/>
            <person name="Rajandream M.A."/>
            <person name="Sucgang R."/>
            <person name="Berriman M."/>
            <person name="Song J."/>
            <person name="Olsen R."/>
            <person name="Szafranski K."/>
            <person name="Xu Q."/>
            <person name="Tunggal B."/>
            <person name="Kummerfeld S."/>
            <person name="Madera M."/>
            <person name="Konfortov B.A."/>
            <person name="Rivero F."/>
            <person name="Bankier A.T."/>
            <person name="Lehmann R."/>
            <person name="Hamlin N."/>
            <person name="Davies R."/>
            <person name="Gaudet P."/>
            <person name="Fey P."/>
            <person name="Pilcher K."/>
            <person name="Chen G."/>
            <person name="Saunders D."/>
            <person name="Sodergren E.J."/>
            <person name="Davis P."/>
            <person name="Kerhornou A."/>
            <person name="Nie X."/>
            <person name="Hall N."/>
            <person name="Anjard C."/>
            <person name="Hemphill L."/>
            <person name="Bason N."/>
            <person name="Farbrother P."/>
            <person name="Desany B."/>
            <person name="Just E."/>
            <person name="Morio T."/>
            <person name="Rost R."/>
            <person name="Churcher C.M."/>
            <person name="Cooper J."/>
            <person name="Haydock S."/>
            <person name="van Driessche N."/>
            <person name="Cronin A."/>
            <person name="Goodhead I."/>
            <person name="Muzny D.M."/>
            <person name="Mourier T."/>
            <person name="Pain A."/>
            <person name="Lu M."/>
            <person name="Harper D."/>
            <person name="Lindsay R."/>
            <person name="Hauser H."/>
            <person name="James K.D."/>
            <person name="Quiles M."/>
            <person name="Madan Babu M."/>
            <person name="Saito T."/>
            <person name="Buchrieser C."/>
            <person name="Wardroper A."/>
            <person name="Felder M."/>
            <person name="Thangavelu M."/>
            <person name="Johnson D."/>
            <person name="Knights A."/>
            <person name="Loulseged H."/>
            <person name="Mungall K.L."/>
            <person name="Oliver K."/>
            <person name="Price C."/>
            <person name="Quail M.A."/>
            <person name="Urushihara H."/>
            <person name="Hernandez J."/>
            <person name="Rabbinowitsch E."/>
            <person name="Steffen D."/>
            <person name="Sanders M."/>
            <person name="Ma J."/>
            <person name="Kohara Y."/>
            <person name="Sharp S."/>
            <person name="Simmonds M.N."/>
            <person name="Spiegler S."/>
            <person name="Tivey A."/>
            <person name="Sugano S."/>
            <person name="White B."/>
            <person name="Walker D."/>
            <person name="Woodward J.R."/>
            <person name="Winckler T."/>
            <person name="Tanaka Y."/>
            <person name="Shaulsky G."/>
            <person name="Schleicher M."/>
            <person name="Weinstock G.M."/>
            <person name="Rosenthal A."/>
            <person name="Cox E.C."/>
            <person name="Chisholm R.L."/>
            <person name="Gibbs R.A."/>
            <person name="Loomis W.F."/>
            <person name="Platzer M."/>
            <person name="Kay R.R."/>
            <person name="Williams J.G."/>
            <person name="Dear P.H."/>
            <person name="Noegel A.A."/>
            <person name="Barrell B.G."/>
            <person name="Kuspa A."/>
        </authorList>
    </citation>
    <scope>NUCLEOTIDE SEQUENCE [LARGE SCALE GENOMIC DNA]</scope>
    <source>
        <strain>AX4</strain>
    </source>
</reference>
<organism>
    <name type="scientific">Dictyostelium discoideum</name>
    <name type="common">Social amoeba</name>
    <dbReference type="NCBI Taxonomy" id="44689"/>
    <lineage>
        <taxon>Eukaryota</taxon>
        <taxon>Amoebozoa</taxon>
        <taxon>Evosea</taxon>
        <taxon>Eumycetozoa</taxon>
        <taxon>Dictyostelia</taxon>
        <taxon>Dictyosteliales</taxon>
        <taxon>Dictyosteliaceae</taxon>
        <taxon>Dictyostelium</taxon>
    </lineage>
</organism>
<dbReference type="EMBL" id="AAFI02000074">
    <property type="protein sequence ID" value="EAL64879.1"/>
    <property type="molecule type" value="Genomic_DNA"/>
</dbReference>
<dbReference type="RefSeq" id="XP_639888.1">
    <property type="nucleotide sequence ID" value="XM_634796.1"/>
</dbReference>
<dbReference type="SMR" id="Q54NM8"/>
<dbReference type="FunCoup" id="Q54NM8">
    <property type="interactions" value="154"/>
</dbReference>
<dbReference type="STRING" id="44689.Q54NM8"/>
<dbReference type="PaxDb" id="44689-DDB0267171"/>
<dbReference type="EnsemblProtists" id="EAL64879">
    <property type="protein sequence ID" value="EAL64879"/>
    <property type="gene ID" value="DDB_G0285133"/>
</dbReference>
<dbReference type="GeneID" id="8624959"/>
<dbReference type="KEGG" id="ddi:DDB_G0285133"/>
<dbReference type="dictyBase" id="DDB_G0285133">
    <property type="gene designation" value="mocs2s"/>
</dbReference>
<dbReference type="VEuPathDB" id="AmoebaDB:DDB_G0285133"/>
<dbReference type="eggNOG" id="ENOG502RSQ4">
    <property type="taxonomic scope" value="Eukaryota"/>
</dbReference>
<dbReference type="HOGENOM" id="CLU_114601_4_3_1"/>
<dbReference type="InParanoid" id="Q54NM8"/>
<dbReference type="OMA" id="INCEYIE"/>
<dbReference type="PhylomeDB" id="Q54NM8"/>
<dbReference type="UniPathway" id="UPA00344"/>
<dbReference type="PRO" id="PR:Q54NM8"/>
<dbReference type="Proteomes" id="UP000002195">
    <property type="component" value="Chromosome 4"/>
</dbReference>
<dbReference type="GO" id="GO:0005829">
    <property type="term" value="C:cytosol"/>
    <property type="evidence" value="ECO:0000250"/>
    <property type="project" value="UniProtKB"/>
</dbReference>
<dbReference type="GO" id="GO:1990133">
    <property type="term" value="C:molybdopterin adenylyltransferase complex"/>
    <property type="evidence" value="ECO:0000318"/>
    <property type="project" value="GO_Central"/>
</dbReference>
<dbReference type="GO" id="GO:1990140">
    <property type="term" value="C:molybdopterin synthase complex"/>
    <property type="evidence" value="ECO:0000250"/>
    <property type="project" value="UniProtKB"/>
</dbReference>
<dbReference type="GO" id="GO:0030366">
    <property type="term" value="F:molybdopterin synthase activity"/>
    <property type="evidence" value="ECO:0007669"/>
    <property type="project" value="UniProtKB-UniRule"/>
</dbReference>
<dbReference type="GO" id="GO:0000166">
    <property type="term" value="F:nucleotide binding"/>
    <property type="evidence" value="ECO:0007669"/>
    <property type="project" value="UniProtKB-KW"/>
</dbReference>
<dbReference type="GO" id="GO:0006777">
    <property type="term" value="P:Mo-molybdopterin cofactor biosynthetic process"/>
    <property type="evidence" value="ECO:0000250"/>
    <property type="project" value="UniProtKB"/>
</dbReference>
<dbReference type="CDD" id="cd00754">
    <property type="entry name" value="Ubl_MoaD"/>
    <property type="match status" value="1"/>
</dbReference>
<dbReference type="FunFam" id="3.10.20.30:FF:000010">
    <property type="entry name" value="Molybdopterin synthase sulfur carrier subunit"/>
    <property type="match status" value="1"/>
</dbReference>
<dbReference type="Gene3D" id="3.10.20.30">
    <property type="match status" value="1"/>
</dbReference>
<dbReference type="HAMAP" id="MF_03051">
    <property type="entry name" value="MOCS2A"/>
    <property type="match status" value="1"/>
</dbReference>
<dbReference type="InterPro" id="IPR012675">
    <property type="entry name" value="Beta-grasp_dom_sf"/>
</dbReference>
<dbReference type="InterPro" id="IPR044672">
    <property type="entry name" value="MOCS2A"/>
</dbReference>
<dbReference type="InterPro" id="IPR028887">
    <property type="entry name" value="MOCS2A_euk"/>
</dbReference>
<dbReference type="InterPro" id="IPR016155">
    <property type="entry name" value="Mopterin_synth/thiamin_S_b"/>
</dbReference>
<dbReference type="InterPro" id="IPR003749">
    <property type="entry name" value="ThiS/MoaD-like"/>
</dbReference>
<dbReference type="PANTHER" id="PTHR33359">
    <property type="entry name" value="MOLYBDOPTERIN SYNTHASE SULFUR CARRIER SUBUNIT"/>
    <property type="match status" value="1"/>
</dbReference>
<dbReference type="PANTHER" id="PTHR33359:SF1">
    <property type="entry name" value="MOLYBDOPTERIN SYNTHASE SULFUR CARRIER SUBUNIT"/>
    <property type="match status" value="1"/>
</dbReference>
<dbReference type="Pfam" id="PF02597">
    <property type="entry name" value="ThiS"/>
    <property type="match status" value="1"/>
</dbReference>
<dbReference type="SUPFAM" id="SSF54285">
    <property type="entry name" value="MoaD/ThiS"/>
    <property type="match status" value="1"/>
</dbReference>
<evidence type="ECO:0000250" key="1"/>
<evidence type="ECO:0000255" key="2">
    <source>
        <dbReference type="HAMAP-Rule" id="MF_03051"/>
    </source>
</evidence>
<feature type="chain" id="PRO_0000331262" description="Molybdopterin synthase sulfur carrier subunit">
    <location>
        <begin position="1"/>
        <end position="86"/>
    </location>
</feature>
<feature type="modified residue" description="1-thioglycine; alternate" evidence="2">
    <location>
        <position position="86"/>
    </location>
</feature>
<feature type="modified residue" description="Glycyl adenylate; alternate" evidence="2">
    <location>
        <position position="86"/>
    </location>
</feature>